<feature type="chain" id="PRO_0000291841" description="Coiled-coil domain-containing protein 78">
    <location>
        <begin position="1"/>
        <end position="438"/>
    </location>
</feature>
<feature type="region of interest" description="Disordered" evidence="2">
    <location>
        <begin position="345"/>
        <end position="381"/>
    </location>
</feature>
<feature type="coiled-coil region" evidence="1">
    <location>
        <begin position="74"/>
        <end position="105"/>
    </location>
</feature>
<feature type="coiled-coil region" evidence="1">
    <location>
        <begin position="217"/>
        <end position="246"/>
    </location>
</feature>
<feature type="splice variant" id="VSP_026252" description="In isoform 5." evidence="6">
    <original>N</original>
    <variation>NVSPLGLAAPAMGLKSARSPKGQEGAGSCTLGLISARRGTFTAQPGREAGLVTAWEWGHSPAWDPPGEWVAVPPQ</variation>
    <location>
        <position position="20"/>
    </location>
</feature>
<feature type="splice variant" id="VSP_026253" description="In isoform 6." evidence="8">
    <location>
        <begin position="134"/>
        <end position="144"/>
    </location>
</feature>
<feature type="splice variant" id="VSP_026254" description="In isoform 3, isoform 5 and isoform 6." evidence="6 8">
    <original>LQGEVKWALEHQEARQQALVTRVATLGRQLQGAREEARAAGQRLATQAVVLCSCQGQLRQAEAENARLQLQLKKLKDEYVLRLQHCAWQAVEHADGAGQAPATTALRTF</original>
    <variation>VSVQPPSSGERAAPETPSLGSHPASPVCPTAAGGSEVGAGASGGPAAGTGDACVSGHLTWGPILEQREPLIVGLLSLTPVSSGQPWAGSCREPERRPGQPGSDWPHRLW</variation>
    <location>
        <begin position="165"/>
        <end position="273"/>
    </location>
</feature>
<feature type="splice variant" id="VSP_026255" description="In isoform 4." evidence="6 7">
    <original>LQGEVKWALEHQEARQQALVTRVATLGRQLQGAREEARAAGQRLATQAVVLCSCQGQLRQAEAENARLQLQLKKLKDEYVLRLQHCAWQAVEH</original>
    <variation>VSVQPPSSGERAAPETPSLGSHPASPVCPTAAGGSEVGAGASGGPAAGTGDACGNPGPAAAGSPRGGQGSRAATGHTGCGAVQLPRPAPSGRG</variation>
    <location>
        <begin position="165"/>
        <end position="257"/>
    </location>
</feature>
<feature type="splice variant" id="VSP_026256" description="In isoform 2." evidence="6 7">
    <location>
        <begin position="188"/>
        <end position="438"/>
    </location>
</feature>
<feature type="splice variant" id="VSP_026257" description="In isoform 4." evidence="6 7">
    <location>
        <begin position="258"/>
        <end position="438"/>
    </location>
</feature>
<feature type="splice variant" id="VSP_026258" description="In isoform 3, isoform 5 and isoform 6." evidence="6 8">
    <location>
        <begin position="274"/>
        <end position="438"/>
    </location>
</feature>
<feature type="sequence variant" id="VAR_032867" description="In dbSNP:rs2071950." evidence="3">
    <original>W</original>
    <variation>R</variation>
    <location>
        <position position="252"/>
    </location>
</feature>
<feature type="sequence conflict" description="In Ref. 2; AAR13900." evidence="9" ref="2">
    <original>I</original>
    <variation>T</variation>
    <location>
        <position position="68"/>
    </location>
</feature>
<feature type="sequence conflict" description="In Ref. 1; BAC87488." evidence="9" ref="1">
    <original>N</original>
    <variation>D</variation>
    <location>
        <position position="153"/>
    </location>
</feature>
<organism>
    <name type="scientific">Homo sapiens</name>
    <name type="common">Human</name>
    <dbReference type="NCBI Taxonomy" id="9606"/>
    <lineage>
        <taxon>Eukaryota</taxon>
        <taxon>Metazoa</taxon>
        <taxon>Chordata</taxon>
        <taxon>Craniata</taxon>
        <taxon>Vertebrata</taxon>
        <taxon>Euteleostomi</taxon>
        <taxon>Mammalia</taxon>
        <taxon>Eutheria</taxon>
        <taxon>Euarchontoglires</taxon>
        <taxon>Primates</taxon>
        <taxon>Haplorrhini</taxon>
        <taxon>Catarrhini</taxon>
        <taxon>Hominidae</taxon>
        <taxon>Homo</taxon>
    </lineage>
</organism>
<comment type="function">
    <text evidence="5">Component of the deuterosome, a structure that promotes de novo centriole amplification in multiciliated cells that can generate more than 100 centrioles. Deuterosome-mediated centriole amplification occurs in terminally differentiated multiciliated cells (G1/0) and not in S phase. Essential for centriole amplification and is required for CEP152 localization to the deuterosome.</text>
</comment>
<comment type="interaction">
    <interactant intactId="EBI-18205352">
        <id>A2IDD5-4</id>
    </interactant>
    <interactant intactId="EBI-6509505">
        <id>Q0VD86</id>
        <label>INCA1</label>
    </interactant>
    <organismsDiffer>false</organismsDiffer>
    <experiments>3</experiments>
</comment>
<comment type="subcellular location">
    <subcellularLocation>
        <location>Cytoplasm</location>
        <location>Cytoskeleton</location>
        <location>Microtubule organizing center</location>
        <location>Centrosome</location>
        <location>Centriole</location>
    </subcellularLocation>
    <subcellularLocation>
        <location>Cytoplasm</location>
        <location>Perinuclear region</location>
    </subcellularLocation>
    <subcellularLocation>
        <location>Cell membrane</location>
        <location>Sarcolemma</location>
    </subcellularLocation>
    <subcellularLocation>
        <location>Sarcoplasmic reticulum</location>
    </subcellularLocation>
    <text>Localizes to centrioles and deuterosome. Found primarily in the perinuclear region as well as along the sarcolemmal membrane and in reticular pattern within the sarcoplasm.</text>
</comment>
<comment type="alternative products">
    <event type="alternative splicing"/>
    <isoform>
        <id>A2IDD5-1</id>
        <name>1</name>
        <sequence type="displayed"/>
    </isoform>
    <isoform>
        <id>A2IDD5-2</id>
        <name>2</name>
        <sequence type="described" ref="VSP_026256"/>
    </isoform>
    <isoform>
        <id>A2IDD5-3</id>
        <name>3</name>
        <sequence type="described" ref="VSP_026254 VSP_026258"/>
    </isoform>
    <isoform>
        <id>A2IDD5-4</id>
        <name>4</name>
        <sequence type="described" ref="VSP_026255 VSP_026257"/>
    </isoform>
    <isoform>
        <id>A2IDD5-5</id>
        <name>5</name>
        <sequence type="described" ref="VSP_026252 VSP_026254 VSP_026258"/>
    </isoform>
    <isoform>
        <id>A2IDD5-6</id>
        <name>6</name>
        <sequence type="described" ref="VSP_026253 VSP_026254 VSP_026258"/>
    </isoform>
</comment>
<comment type="tissue specificity">
    <text evidence="4">Expressed primarily in skeletal muscle.</text>
</comment>
<comment type="disease" evidence="4">
    <disease id="DI-03519">
        <name>Myopathy, centronuclear, 4</name>
        <acronym>CNM4</acronym>
        <description>A congenital muscle disorder characterized by progressive muscular weakness and wasting involving mainly limb girdle, trunk, and neck muscles. It may also affect distal muscles. Weakness may be present during childhood or adolescence or may not become evident until the third decade of life. Ptosis is a frequent clinical feature. The most prominent histopathologic features include high frequency of centrally located nuclei in muscle fibers not secondary to regeneration, radial arrangement of sarcoplasmic strands around the central nuclei, and predominance and hypotrophy of type 1 fibers.</description>
        <dbReference type="MIM" id="614807"/>
    </disease>
    <text>The disease is caused by variants affecting the gene represented in this entry.</text>
</comment>
<comment type="miscellaneous">
    <molecule>Isoform 3</molecule>
    <text evidence="9">Due to intron retention.</text>
</comment>
<comment type="miscellaneous">
    <molecule>Isoform 4</molecule>
    <text evidence="9">Due to intron retention.</text>
</comment>
<comment type="miscellaneous">
    <molecule>Isoform 5</molecule>
    <text evidence="9">Due to intron retention.</text>
</comment>
<comment type="miscellaneous">
    <molecule>Isoform 6</molecule>
    <text evidence="9">Due to intron retention.</text>
</comment>
<comment type="similarity">
    <text evidence="9">Belongs to the CCDC78 family.</text>
</comment>
<comment type="sequence caution" evidence="9">
    <conflict type="erroneous gene model prediction">
        <sequence resource="EMBL-CDS" id="AAK61249"/>
    </conflict>
</comment>
<name>CCD78_HUMAN</name>
<reference key="1">
    <citation type="journal article" date="2004" name="Nat. Genet.">
        <title>Complete sequencing and characterization of 21,243 full-length human cDNAs.</title>
        <authorList>
            <person name="Ota T."/>
            <person name="Suzuki Y."/>
            <person name="Nishikawa T."/>
            <person name="Otsuki T."/>
            <person name="Sugiyama T."/>
            <person name="Irie R."/>
            <person name="Wakamatsu A."/>
            <person name="Hayashi K."/>
            <person name="Sato H."/>
            <person name="Nagai K."/>
            <person name="Kimura K."/>
            <person name="Makita H."/>
            <person name="Sekine M."/>
            <person name="Obayashi M."/>
            <person name="Nishi T."/>
            <person name="Shibahara T."/>
            <person name="Tanaka T."/>
            <person name="Ishii S."/>
            <person name="Yamamoto J."/>
            <person name="Saito K."/>
            <person name="Kawai Y."/>
            <person name="Isono Y."/>
            <person name="Nakamura Y."/>
            <person name="Nagahari K."/>
            <person name="Murakami K."/>
            <person name="Yasuda T."/>
            <person name="Iwayanagi T."/>
            <person name="Wagatsuma M."/>
            <person name="Shiratori A."/>
            <person name="Sudo H."/>
            <person name="Hosoiri T."/>
            <person name="Kaku Y."/>
            <person name="Kodaira H."/>
            <person name="Kondo H."/>
            <person name="Sugawara M."/>
            <person name="Takahashi M."/>
            <person name="Kanda K."/>
            <person name="Yokoi T."/>
            <person name="Furuya T."/>
            <person name="Kikkawa E."/>
            <person name="Omura Y."/>
            <person name="Abe K."/>
            <person name="Kamihara K."/>
            <person name="Katsuta N."/>
            <person name="Sato K."/>
            <person name="Tanikawa M."/>
            <person name="Yamazaki M."/>
            <person name="Ninomiya K."/>
            <person name="Ishibashi T."/>
            <person name="Yamashita H."/>
            <person name="Murakawa K."/>
            <person name="Fujimori K."/>
            <person name="Tanai H."/>
            <person name="Kimata M."/>
            <person name="Watanabe M."/>
            <person name="Hiraoka S."/>
            <person name="Chiba Y."/>
            <person name="Ishida S."/>
            <person name="Ono Y."/>
            <person name="Takiguchi S."/>
            <person name="Watanabe S."/>
            <person name="Yosida M."/>
            <person name="Hotuta T."/>
            <person name="Kusano J."/>
            <person name="Kanehori K."/>
            <person name="Takahashi-Fujii A."/>
            <person name="Hara H."/>
            <person name="Tanase T.-O."/>
            <person name="Nomura Y."/>
            <person name="Togiya S."/>
            <person name="Komai F."/>
            <person name="Hara R."/>
            <person name="Takeuchi K."/>
            <person name="Arita M."/>
            <person name="Imose N."/>
            <person name="Musashino K."/>
            <person name="Yuuki H."/>
            <person name="Oshima A."/>
            <person name="Sasaki N."/>
            <person name="Aotsuka S."/>
            <person name="Yoshikawa Y."/>
            <person name="Matsunawa H."/>
            <person name="Ichihara T."/>
            <person name="Shiohata N."/>
            <person name="Sano S."/>
            <person name="Moriya S."/>
            <person name="Momiyama H."/>
            <person name="Satoh N."/>
            <person name="Takami S."/>
            <person name="Terashima Y."/>
            <person name="Suzuki O."/>
            <person name="Nakagawa S."/>
            <person name="Senoh A."/>
            <person name="Mizoguchi H."/>
            <person name="Goto Y."/>
            <person name="Shimizu F."/>
            <person name="Wakebe H."/>
            <person name="Hishigaki H."/>
            <person name="Watanabe T."/>
            <person name="Sugiyama A."/>
            <person name="Takemoto M."/>
            <person name="Kawakami B."/>
            <person name="Yamazaki M."/>
            <person name="Watanabe K."/>
            <person name="Kumagai A."/>
            <person name="Itakura S."/>
            <person name="Fukuzumi Y."/>
            <person name="Fujimori Y."/>
            <person name="Komiyama M."/>
            <person name="Tashiro H."/>
            <person name="Tanigami A."/>
            <person name="Fujiwara T."/>
            <person name="Ono T."/>
            <person name="Yamada K."/>
            <person name="Fujii Y."/>
            <person name="Ozaki K."/>
            <person name="Hirao M."/>
            <person name="Ohmori Y."/>
            <person name="Kawabata A."/>
            <person name="Hikiji T."/>
            <person name="Kobatake N."/>
            <person name="Inagaki H."/>
            <person name="Ikema Y."/>
            <person name="Okamoto S."/>
            <person name="Okitani R."/>
            <person name="Kawakami T."/>
            <person name="Noguchi S."/>
            <person name="Itoh T."/>
            <person name="Shigeta K."/>
            <person name="Senba T."/>
            <person name="Matsumura K."/>
            <person name="Nakajima Y."/>
            <person name="Mizuno T."/>
            <person name="Morinaga M."/>
            <person name="Sasaki M."/>
            <person name="Togashi T."/>
            <person name="Oyama M."/>
            <person name="Hata H."/>
            <person name="Watanabe M."/>
            <person name="Komatsu T."/>
            <person name="Mizushima-Sugano J."/>
            <person name="Satoh T."/>
            <person name="Shirai Y."/>
            <person name="Takahashi Y."/>
            <person name="Nakagawa K."/>
            <person name="Okumura K."/>
            <person name="Nagase T."/>
            <person name="Nomura N."/>
            <person name="Kikuchi H."/>
            <person name="Masuho Y."/>
            <person name="Yamashita R."/>
            <person name="Nakai K."/>
            <person name="Yada T."/>
            <person name="Nakamura Y."/>
            <person name="Ohara O."/>
            <person name="Isogai T."/>
            <person name="Sugano S."/>
        </authorList>
    </citation>
    <scope>NUCLEOTIDE SEQUENCE [LARGE SCALE MRNA] (ISOFORMS 2; 3; 4 AND 5)</scope>
    <source>
        <tissue>Lung</tissue>
        <tissue>Trachea</tissue>
    </source>
</reference>
<reference key="2">
    <citation type="submission" date="2003-10" db="EMBL/GenBank/DDBJ databases">
        <authorList>
            <person name="Li H."/>
            <person name="Zheng G."/>
            <person name="Zhong G."/>
            <person name="Ke R."/>
            <person name="Zhou G."/>
            <person name="Shen C."/>
            <person name="Lin L."/>
            <person name="Yang S."/>
        </authorList>
    </citation>
    <scope>NUCLEOTIDE SEQUENCE [LARGE SCALE MRNA] (ISOFORM 6)</scope>
</reference>
<reference key="3">
    <citation type="journal article" date="2001" name="Hum. Mol. Genet.">
        <title>Sequence, structure and pathology of the fully annotated terminal 2 Mb of the short arm of human chromosome 16.</title>
        <authorList>
            <person name="Daniels R.J."/>
            <person name="Peden J.F."/>
            <person name="Lloyd C."/>
            <person name="Horsley S.W."/>
            <person name="Clark K."/>
            <person name="Tufarelli C."/>
            <person name="Kearney L."/>
            <person name="Buckle V.J."/>
            <person name="Doggett N.A."/>
            <person name="Flint J."/>
            <person name="Higgs D.R."/>
        </authorList>
    </citation>
    <scope>NUCLEOTIDE SEQUENCE [LARGE SCALE GENOMIC DNA]</scope>
</reference>
<reference key="4">
    <citation type="journal article" date="2004" name="Nature">
        <title>The sequence and analysis of duplication-rich human chromosome 16.</title>
        <authorList>
            <person name="Martin J."/>
            <person name="Han C."/>
            <person name="Gordon L.A."/>
            <person name="Terry A."/>
            <person name="Prabhakar S."/>
            <person name="She X."/>
            <person name="Xie G."/>
            <person name="Hellsten U."/>
            <person name="Chan Y.M."/>
            <person name="Altherr M."/>
            <person name="Couronne O."/>
            <person name="Aerts A."/>
            <person name="Bajorek E."/>
            <person name="Black S."/>
            <person name="Blumer H."/>
            <person name="Branscomb E."/>
            <person name="Brown N.C."/>
            <person name="Bruno W.J."/>
            <person name="Buckingham J.M."/>
            <person name="Callen D.F."/>
            <person name="Campbell C.S."/>
            <person name="Campbell M.L."/>
            <person name="Campbell E.W."/>
            <person name="Caoile C."/>
            <person name="Challacombe J.F."/>
            <person name="Chasteen L.A."/>
            <person name="Chertkov O."/>
            <person name="Chi H.C."/>
            <person name="Christensen M."/>
            <person name="Clark L.M."/>
            <person name="Cohn J.D."/>
            <person name="Denys M."/>
            <person name="Detter J.C."/>
            <person name="Dickson M."/>
            <person name="Dimitrijevic-Bussod M."/>
            <person name="Escobar J."/>
            <person name="Fawcett J.J."/>
            <person name="Flowers D."/>
            <person name="Fotopulos D."/>
            <person name="Glavina T."/>
            <person name="Gomez M."/>
            <person name="Gonzales E."/>
            <person name="Goodstein D."/>
            <person name="Goodwin L.A."/>
            <person name="Grady D.L."/>
            <person name="Grigoriev I."/>
            <person name="Groza M."/>
            <person name="Hammon N."/>
            <person name="Hawkins T."/>
            <person name="Haydu L."/>
            <person name="Hildebrand C.E."/>
            <person name="Huang W."/>
            <person name="Israni S."/>
            <person name="Jett J."/>
            <person name="Jewett P.B."/>
            <person name="Kadner K."/>
            <person name="Kimball H."/>
            <person name="Kobayashi A."/>
            <person name="Krawczyk M.-C."/>
            <person name="Leyba T."/>
            <person name="Longmire J.L."/>
            <person name="Lopez F."/>
            <person name="Lou Y."/>
            <person name="Lowry S."/>
            <person name="Ludeman T."/>
            <person name="Manohar C.F."/>
            <person name="Mark G.A."/>
            <person name="McMurray K.L."/>
            <person name="Meincke L.J."/>
            <person name="Morgan J."/>
            <person name="Moyzis R.K."/>
            <person name="Mundt M.O."/>
            <person name="Munk A.C."/>
            <person name="Nandkeshwar R.D."/>
            <person name="Pitluck S."/>
            <person name="Pollard M."/>
            <person name="Predki P."/>
            <person name="Parson-Quintana B."/>
            <person name="Ramirez L."/>
            <person name="Rash S."/>
            <person name="Retterer J."/>
            <person name="Ricke D.O."/>
            <person name="Robinson D.L."/>
            <person name="Rodriguez A."/>
            <person name="Salamov A."/>
            <person name="Saunders E.H."/>
            <person name="Scott D."/>
            <person name="Shough T."/>
            <person name="Stallings R.L."/>
            <person name="Stalvey M."/>
            <person name="Sutherland R.D."/>
            <person name="Tapia R."/>
            <person name="Tesmer J.G."/>
            <person name="Thayer N."/>
            <person name="Thompson L.S."/>
            <person name="Tice H."/>
            <person name="Torney D.C."/>
            <person name="Tran-Gyamfi M."/>
            <person name="Tsai M."/>
            <person name="Ulanovsky L.E."/>
            <person name="Ustaszewska A."/>
            <person name="Vo N."/>
            <person name="White P.S."/>
            <person name="Williams A.L."/>
            <person name="Wills P.L."/>
            <person name="Wu J.-R."/>
            <person name="Wu K."/>
            <person name="Yang J."/>
            <person name="DeJong P."/>
            <person name="Bruce D."/>
            <person name="Doggett N.A."/>
            <person name="Deaven L."/>
            <person name="Schmutz J."/>
            <person name="Grimwood J."/>
            <person name="Richardson P."/>
            <person name="Rokhsar D.S."/>
            <person name="Eichler E.E."/>
            <person name="Gilna P."/>
            <person name="Lucas S.M."/>
            <person name="Myers R.M."/>
            <person name="Rubin E.M."/>
            <person name="Pennacchio L.A."/>
        </authorList>
    </citation>
    <scope>NUCLEOTIDE SEQUENCE [LARGE SCALE GENOMIC DNA]</scope>
</reference>
<reference key="5">
    <citation type="submission" date="2005-09" db="EMBL/GenBank/DDBJ databases">
        <authorList>
            <person name="Mural R.J."/>
            <person name="Istrail S."/>
            <person name="Sutton G.G."/>
            <person name="Florea L."/>
            <person name="Halpern A.L."/>
            <person name="Mobarry C.M."/>
            <person name="Lippert R."/>
            <person name="Walenz B."/>
            <person name="Shatkay H."/>
            <person name="Dew I."/>
            <person name="Miller J.R."/>
            <person name="Flanigan M.J."/>
            <person name="Edwards N.J."/>
            <person name="Bolanos R."/>
            <person name="Fasulo D."/>
            <person name="Halldorsson B.V."/>
            <person name="Hannenhalli S."/>
            <person name="Turner R."/>
            <person name="Yooseph S."/>
            <person name="Lu F."/>
            <person name="Nusskern D.R."/>
            <person name="Shue B.C."/>
            <person name="Zheng X.H."/>
            <person name="Zhong F."/>
            <person name="Delcher A.L."/>
            <person name="Huson D.H."/>
            <person name="Kravitz S.A."/>
            <person name="Mouchard L."/>
            <person name="Reinert K."/>
            <person name="Remington K.A."/>
            <person name="Clark A.G."/>
            <person name="Waterman M.S."/>
            <person name="Eichler E.E."/>
            <person name="Adams M.D."/>
            <person name="Hunkapiller M.W."/>
            <person name="Myers E.W."/>
            <person name="Venter J.C."/>
        </authorList>
    </citation>
    <scope>NUCLEOTIDE SEQUENCE [LARGE SCALE GENOMIC DNA]</scope>
</reference>
<reference key="6">
    <citation type="journal article" date="2004" name="Genome Res.">
        <title>The status, quality, and expansion of the NIH full-length cDNA project: the Mammalian Gene Collection (MGC).</title>
        <authorList>
            <consortium name="The MGC Project Team"/>
        </authorList>
    </citation>
    <scope>NUCLEOTIDE SEQUENCE [LARGE SCALE MRNA] (ISOFORMS 1; 2 AND 4)</scope>
    <scope>VARIANT ARG-252</scope>
    <source>
        <tissue>Brain</tissue>
        <tissue>Lung</tissue>
    </source>
</reference>
<reference key="7">
    <citation type="journal article" date="2012" name="Am. J. Hum. Genet.">
        <title>Dominant mutation of ccdc78 in a unique congenital myopathy with prominent internal nuclei and atypical cores.</title>
        <authorList>
            <person name="Majczenko K."/>
            <person name="Davidson A.E."/>
            <person name="Camelo-Piragua S."/>
            <person name="Agrawal P.B."/>
            <person name="Manfready R.A."/>
            <person name="Li X."/>
            <person name="Joshi S."/>
            <person name="Xu J."/>
            <person name="Peng W."/>
            <person name="Beggs A.H."/>
            <person name="Li J.Z."/>
            <person name="Burmeister M."/>
            <person name="Dowling J.J."/>
        </authorList>
    </citation>
    <scope>SUBCELLULAR LOCATION</scope>
    <scope>TISSUE SPECIFICITY</scope>
    <scope>INVOLVEMENT IN CNM4</scope>
</reference>
<reference key="8">
    <citation type="journal article" date="2013" name="Dev. Cell">
        <title>Deuterosome-mediated centriole biogenesis.</title>
        <authorList>
            <person name="Klos Dehring D.A."/>
            <person name="Vladar E.K."/>
            <person name="Werner M.E."/>
            <person name="Mitchell J.W."/>
            <person name="Hwang P."/>
            <person name="Mitchell B.J."/>
        </authorList>
    </citation>
    <scope>FUNCTION</scope>
    <scope>SUBCELLULAR LOCATION</scope>
</reference>
<evidence type="ECO:0000255" key="1"/>
<evidence type="ECO:0000256" key="2">
    <source>
        <dbReference type="SAM" id="MobiDB-lite"/>
    </source>
</evidence>
<evidence type="ECO:0000269" key="3">
    <source>
    </source>
</evidence>
<evidence type="ECO:0000269" key="4">
    <source>
    </source>
</evidence>
<evidence type="ECO:0000269" key="5">
    <source>
    </source>
</evidence>
<evidence type="ECO:0000303" key="6">
    <source>
    </source>
</evidence>
<evidence type="ECO:0000303" key="7">
    <source>
    </source>
</evidence>
<evidence type="ECO:0000303" key="8">
    <source ref="2"/>
</evidence>
<evidence type="ECO:0000305" key="9"/>
<gene>
    <name type="primary">CCDC78</name>
    <name type="synonym">C16orf25</name>
    <name type="ORF">JFP10</name>
</gene>
<accession>A2IDD5</accession>
<accession>B4DNY4</accession>
<accession>B4E1U6</accession>
<accession>Q05BY7</accession>
<accession>Q05CA0</accession>
<accession>Q6T2V5</accession>
<accession>Q6ZR33</accession>
<accession>Q8IUR3</accession>
<accession>Q8NAY7</accession>
<accession>Q96S12</accession>
<keyword id="KW-0025">Alternative splicing</keyword>
<keyword id="KW-1003">Cell membrane</keyword>
<keyword id="KW-0970">Cilium biogenesis/degradation</keyword>
<keyword id="KW-0175">Coiled coil</keyword>
<keyword id="KW-0963">Cytoplasm</keyword>
<keyword id="KW-0206">Cytoskeleton</keyword>
<keyword id="KW-0472">Membrane</keyword>
<keyword id="KW-1267">Proteomics identification</keyword>
<keyword id="KW-1185">Reference proteome</keyword>
<keyword id="KW-0703">Sarcoplasmic reticulum</keyword>
<dbReference type="EMBL" id="AK091831">
    <property type="protein sequence ID" value="BAC03757.1"/>
    <property type="molecule type" value="mRNA"/>
</dbReference>
<dbReference type="EMBL" id="AK128538">
    <property type="protein sequence ID" value="BAC87488.1"/>
    <property type="molecule type" value="mRNA"/>
</dbReference>
<dbReference type="EMBL" id="AK298111">
    <property type="protein sequence ID" value="BAG60396.1"/>
    <property type="molecule type" value="mRNA"/>
</dbReference>
<dbReference type="EMBL" id="AK303991">
    <property type="protein sequence ID" value="BAG64908.1"/>
    <property type="molecule type" value="mRNA"/>
</dbReference>
<dbReference type="EMBL" id="AY439221">
    <property type="protein sequence ID" value="AAR13900.1"/>
    <property type="molecule type" value="mRNA"/>
</dbReference>
<dbReference type="EMBL" id="AE006464">
    <property type="protein sequence ID" value="AAK61249.1"/>
    <property type="status" value="ALT_SEQ"/>
    <property type="molecule type" value="Genomic_DNA"/>
</dbReference>
<dbReference type="EMBL" id="Z98258">
    <property type="status" value="NOT_ANNOTATED_CDS"/>
    <property type="molecule type" value="Genomic_DNA"/>
</dbReference>
<dbReference type="EMBL" id="CH471112">
    <property type="protein sequence ID" value="EAW85742.1"/>
    <property type="molecule type" value="Genomic_DNA"/>
</dbReference>
<dbReference type="EMBL" id="BC027941">
    <property type="status" value="NOT_ANNOTATED_CDS"/>
    <property type="molecule type" value="mRNA"/>
</dbReference>
<dbReference type="EMBL" id="BC031561">
    <property type="status" value="NOT_ANNOTATED_CDS"/>
    <property type="molecule type" value="mRNA"/>
</dbReference>
<dbReference type="EMBL" id="BC042110">
    <property type="protein sequence ID" value="AAH42110.1"/>
    <property type="molecule type" value="mRNA"/>
</dbReference>
<dbReference type="CCDS" id="CCDS32353.1">
    <molecule id="A2IDD5-1"/>
</dbReference>
<dbReference type="RefSeq" id="NP_001026907.2">
    <molecule id="A2IDD5-1"/>
    <property type="nucleotide sequence ID" value="NM_001031737.3"/>
</dbReference>
<dbReference type="RefSeq" id="XP_047289563.1">
    <molecule id="A2IDD5-6"/>
    <property type="nucleotide sequence ID" value="XM_047433607.1"/>
</dbReference>
<dbReference type="RefSeq" id="XP_054235560.1">
    <molecule id="A2IDD5-6"/>
    <property type="nucleotide sequence ID" value="XM_054379585.1"/>
</dbReference>
<dbReference type="SMR" id="A2IDD5"/>
<dbReference type="BioGRID" id="125849">
    <property type="interactions" value="14"/>
</dbReference>
<dbReference type="FunCoup" id="A2IDD5">
    <property type="interactions" value="51"/>
</dbReference>
<dbReference type="IntAct" id="A2IDD5">
    <property type="interactions" value="5"/>
</dbReference>
<dbReference type="STRING" id="9606.ENSP00000293889"/>
<dbReference type="iPTMnet" id="A2IDD5"/>
<dbReference type="PhosphoSitePlus" id="A2IDD5"/>
<dbReference type="BioMuta" id="CCDC78"/>
<dbReference type="jPOST" id="A2IDD5"/>
<dbReference type="MassIVE" id="A2IDD5"/>
<dbReference type="PaxDb" id="9606-ENSP00000293889"/>
<dbReference type="PeptideAtlas" id="A2IDD5"/>
<dbReference type="ProteomicsDB" id="450">
    <molecule id="A2IDD5-1"/>
</dbReference>
<dbReference type="ProteomicsDB" id="451">
    <molecule id="A2IDD5-2"/>
</dbReference>
<dbReference type="ProteomicsDB" id="452">
    <molecule id="A2IDD5-3"/>
</dbReference>
<dbReference type="ProteomicsDB" id="453">
    <molecule id="A2IDD5-4"/>
</dbReference>
<dbReference type="ProteomicsDB" id="454">
    <molecule id="A2IDD5-5"/>
</dbReference>
<dbReference type="ProteomicsDB" id="455">
    <molecule id="A2IDD5-6"/>
</dbReference>
<dbReference type="Antibodypedia" id="22861">
    <property type="antibodies" value="25 antibodies from 13 providers"/>
</dbReference>
<dbReference type="DNASU" id="124093"/>
<dbReference type="Ensembl" id="ENST00000293889.10">
    <molecule id="A2IDD5-1"/>
    <property type="protein sequence ID" value="ENSP00000293889.6"/>
    <property type="gene ID" value="ENSG00000162004.19"/>
</dbReference>
<dbReference type="GeneID" id="124093"/>
<dbReference type="KEGG" id="hsa:124093"/>
<dbReference type="UCSC" id="uc002cjg.3">
    <molecule id="A2IDD5-1"/>
    <property type="organism name" value="human"/>
</dbReference>
<dbReference type="AGR" id="HGNC:14153"/>
<dbReference type="CTD" id="124093"/>
<dbReference type="DisGeNET" id="124093"/>
<dbReference type="GeneCards" id="CCDC78"/>
<dbReference type="HGNC" id="HGNC:14153">
    <property type="gene designation" value="CCDC78"/>
</dbReference>
<dbReference type="HPA" id="ENSG00000162004">
    <property type="expression patterns" value="Tissue enhanced (brain, fallopian tube)"/>
</dbReference>
<dbReference type="MalaCards" id="CCDC78"/>
<dbReference type="MIM" id="614666">
    <property type="type" value="gene"/>
</dbReference>
<dbReference type="MIM" id="614807">
    <property type="type" value="phenotype"/>
</dbReference>
<dbReference type="neXtProt" id="NX_A2IDD5"/>
<dbReference type="OpenTargets" id="ENSG00000162004"/>
<dbReference type="Orphanet" id="319160">
    <property type="disease" value="Congenital myopathy with internal nuclei and atypical cores"/>
</dbReference>
<dbReference type="PharmGKB" id="PA25539"/>
<dbReference type="VEuPathDB" id="HostDB:ENSG00000162004"/>
<dbReference type="eggNOG" id="ENOG502SNR6">
    <property type="taxonomic scope" value="Eukaryota"/>
</dbReference>
<dbReference type="GeneTree" id="ENSGT00390000013678"/>
<dbReference type="HOGENOM" id="CLU_032909_0_0_1"/>
<dbReference type="InParanoid" id="A2IDD5"/>
<dbReference type="OrthoDB" id="2113965at2759"/>
<dbReference type="PAN-GO" id="A2IDD5">
    <property type="GO annotations" value="1 GO annotation based on evolutionary models"/>
</dbReference>
<dbReference type="PhylomeDB" id="A2IDD5"/>
<dbReference type="TreeFam" id="TF336362"/>
<dbReference type="PathwayCommons" id="A2IDD5"/>
<dbReference type="SignaLink" id="A2IDD5"/>
<dbReference type="BioGRID-ORCS" id="124093">
    <property type="hits" value="91 hits in 1158 CRISPR screens"/>
</dbReference>
<dbReference type="ChiTaRS" id="CCDC78">
    <property type="organism name" value="human"/>
</dbReference>
<dbReference type="GenomeRNAi" id="124093"/>
<dbReference type="Pharos" id="A2IDD5">
    <property type="development level" value="Tbio"/>
</dbReference>
<dbReference type="PRO" id="PR:A2IDD5"/>
<dbReference type="Proteomes" id="UP000005640">
    <property type="component" value="Chromosome 16"/>
</dbReference>
<dbReference type="RNAct" id="A2IDD5">
    <property type="molecule type" value="protein"/>
</dbReference>
<dbReference type="Bgee" id="ENSG00000162004">
    <property type="expression patterns" value="Expressed in right uterine tube and 111 other cell types or tissues"/>
</dbReference>
<dbReference type="ExpressionAtlas" id="A2IDD5">
    <property type="expression patterns" value="baseline and differential"/>
</dbReference>
<dbReference type="GO" id="GO:0005814">
    <property type="term" value="C:centriole"/>
    <property type="evidence" value="ECO:0000314"/>
    <property type="project" value="UniProtKB"/>
</dbReference>
<dbReference type="GO" id="GO:0005737">
    <property type="term" value="C:cytoplasm"/>
    <property type="evidence" value="ECO:0000318"/>
    <property type="project" value="GO_Central"/>
</dbReference>
<dbReference type="GO" id="GO:0098536">
    <property type="term" value="C:deuterosome"/>
    <property type="evidence" value="ECO:0000314"/>
    <property type="project" value="UniProtKB"/>
</dbReference>
<dbReference type="GO" id="GO:0048471">
    <property type="term" value="C:perinuclear region of cytoplasm"/>
    <property type="evidence" value="ECO:0000314"/>
    <property type="project" value="UniProtKB"/>
</dbReference>
<dbReference type="GO" id="GO:0042383">
    <property type="term" value="C:sarcolemma"/>
    <property type="evidence" value="ECO:0000314"/>
    <property type="project" value="UniProtKB"/>
</dbReference>
<dbReference type="GO" id="GO:0016529">
    <property type="term" value="C:sarcoplasmic reticulum"/>
    <property type="evidence" value="ECO:0000314"/>
    <property type="project" value="UniProtKB"/>
</dbReference>
<dbReference type="GO" id="GO:0030030">
    <property type="term" value="P:cell projection organization"/>
    <property type="evidence" value="ECO:0007669"/>
    <property type="project" value="UniProtKB-KW"/>
</dbReference>
<dbReference type="GO" id="GO:0098535">
    <property type="term" value="P:de novo centriole assembly involved in multi-ciliated epithelial cell differentiation"/>
    <property type="evidence" value="ECO:0000314"/>
    <property type="project" value="UniProtKB"/>
</dbReference>
<dbReference type="GO" id="GO:0003009">
    <property type="term" value="P:skeletal muscle contraction"/>
    <property type="evidence" value="ECO:0000315"/>
    <property type="project" value="UniProtKB"/>
</dbReference>
<dbReference type="InterPro" id="IPR039873">
    <property type="entry name" value="CCDC78"/>
</dbReference>
<dbReference type="InterPro" id="IPR029329">
    <property type="entry name" value="DUF4472"/>
</dbReference>
<dbReference type="PANTHER" id="PTHR22106">
    <property type="entry name" value="COILED-COIL DOMAIN-CONTAINING PROTEIN 78"/>
    <property type="match status" value="1"/>
</dbReference>
<dbReference type="PANTHER" id="PTHR22106:SF5">
    <property type="entry name" value="COILED-COIL DOMAIN-CONTAINING PROTEIN 78"/>
    <property type="match status" value="1"/>
</dbReference>
<dbReference type="Pfam" id="PF14739">
    <property type="entry name" value="DUF4472"/>
    <property type="match status" value="1"/>
</dbReference>
<sequence length="438" mass="48521">MEHAATTGPRPGPPSRRVENVVLRAKDWLPGAPGGTAVWATSLEAEVPPDLALNKEQQLQISKELVDIQITTHHLHEQHEAEIFQLKSEILRLESRVLELELRGDGTSQGCAVPVESDPRHPRAAAQELRHKAQVPGHSDDHRFQVQPKNTMNPENEQHRLGSGLQGEVKWALEHQEARQQALVTRVATLGRQLQGAREEARAAGQRLATQAVVLCSCQGQLRQAEAENARLQLQLKKLKDEYVLRLQHCAWQAVEHADGAGQAPATTALRTFLEATLEDIRAAHRSREQQLARAARSYHKRLVDLSRRHEELLVAYRAPGNPQAIFDIASLDLEPLPVPLVTDFSHREDQHGGPGALLSSPKKRPGGASQGGTSEPQGLDAASWAQIHQKLRDFSRSTQSWNGSGHSCWSGPRWLKSNFLSYRSTWTSTWAGTSTKS</sequence>
<protein>
    <recommendedName>
        <fullName>Coiled-coil domain-containing protein 78</fullName>
    </recommendedName>
    <alternativeName>
        <fullName>hsCCDC78</fullName>
    </alternativeName>
</protein>
<proteinExistence type="evidence at protein level"/>